<protein>
    <recommendedName>
        <fullName evidence="1">Polyphosphate kinase</fullName>
        <ecNumber evidence="1">2.7.4.1</ecNumber>
    </recommendedName>
    <alternativeName>
        <fullName evidence="1">ATP-polyphosphate phosphotransferase</fullName>
    </alternativeName>
    <alternativeName>
        <fullName evidence="1">Polyphosphoric acid kinase</fullName>
    </alternativeName>
</protein>
<feature type="chain" id="PRO_1000120503" description="Polyphosphate kinase">
    <location>
        <begin position="1"/>
        <end position="738"/>
    </location>
</feature>
<feature type="region of interest" description="Disordered" evidence="2">
    <location>
        <begin position="1"/>
        <end position="48"/>
    </location>
</feature>
<feature type="compositionally biased region" description="Basic and acidic residues" evidence="2">
    <location>
        <begin position="19"/>
        <end position="30"/>
    </location>
</feature>
<feature type="active site" description="Phosphohistidine intermediate" evidence="1">
    <location>
        <position position="487"/>
    </location>
</feature>
<feature type="binding site" evidence="1">
    <location>
        <position position="91"/>
    </location>
    <ligand>
        <name>ATP</name>
        <dbReference type="ChEBI" id="CHEBI:30616"/>
    </ligand>
</feature>
<feature type="binding site" evidence="1">
    <location>
        <position position="427"/>
    </location>
    <ligand>
        <name>Mg(2+)</name>
        <dbReference type="ChEBI" id="CHEBI:18420"/>
    </ligand>
</feature>
<feature type="binding site" evidence="1">
    <location>
        <position position="457"/>
    </location>
    <ligand>
        <name>Mg(2+)</name>
        <dbReference type="ChEBI" id="CHEBI:18420"/>
    </ligand>
</feature>
<feature type="binding site" evidence="1">
    <location>
        <position position="520"/>
    </location>
    <ligand>
        <name>ATP</name>
        <dbReference type="ChEBI" id="CHEBI:30616"/>
    </ligand>
</feature>
<feature type="binding site" evidence="1">
    <location>
        <position position="620"/>
    </location>
    <ligand>
        <name>ATP</name>
        <dbReference type="ChEBI" id="CHEBI:30616"/>
    </ligand>
</feature>
<feature type="binding site" evidence="1">
    <location>
        <position position="648"/>
    </location>
    <ligand>
        <name>ATP</name>
        <dbReference type="ChEBI" id="CHEBI:30616"/>
    </ligand>
</feature>
<gene>
    <name evidence="1" type="primary">ppk</name>
    <name type="ordered locus">MMAR_1730</name>
</gene>
<keyword id="KW-0067">ATP-binding</keyword>
<keyword id="KW-0418">Kinase</keyword>
<keyword id="KW-0460">Magnesium</keyword>
<keyword id="KW-0479">Metal-binding</keyword>
<keyword id="KW-0547">Nucleotide-binding</keyword>
<keyword id="KW-0597">Phosphoprotein</keyword>
<keyword id="KW-1185">Reference proteome</keyword>
<keyword id="KW-0808">Transferase</keyword>
<accession>B2HII5</accession>
<name>PPK1_MYCMM</name>
<evidence type="ECO:0000255" key="1">
    <source>
        <dbReference type="HAMAP-Rule" id="MF_00347"/>
    </source>
</evidence>
<evidence type="ECO:0000256" key="2">
    <source>
        <dbReference type="SAM" id="MobiDB-lite"/>
    </source>
</evidence>
<proteinExistence type="inferred from homology"/>
<organism>
    <name type="scientific">Mycobacterium marinum (strain ATCC BAA-535 / M)</name>
    <dbReference type="NCBI Taxonomy" id="216594"/>
    <lineage>
        <taxon>Bacteria</taxon>
        <taxon>Bacillati</taxon>
        <taxon>Actinomycetota</taxon>
        <taxon>Actinomycetes</taxon>
        <taxon>Mycobacteriales</taxon>
        <taxon>Mycobacteriaceae</taxon>
        <taxon>Mycobacterium</taxon>
        <taxon>Mycobacterium ulcerans group</taxon>
    </lineage>
</organism>
<sequence>MIGNDRWVTEIETGPVTEARPDTNAREPGDRTPAAPPAATPAATTDQLPEDRYLNRELSWLEFNARVLALAADDSMPLLERAKFLAIFASNLDEFYMVRVAGLKRRDQMGLSALSADGLTPREQLGRIGEQTQRIASRHARVFRDSVLPALGEEGIYVVTWADLDQAEREQLSTYFHEQVFPVLTPLAVDPAHPFPFVSGLSLNLAVTVRQPEDGGQHFARVKVPDNVDRFVELGGTDTDGAEGAAVHRFLPVEELIAAFLPVLFPGMEIVEHHAFRITRNADFEVEEDRDEDLLQALERELARRRFGSPVRLEVADDMTEGMLELLLRELDVHPGDVIEVPGLLDLSSLWQIYGLDRPALKDRTFVPATHPAFAERETPKSIFATLREGDVLVHHPYYSFSTSVQRFIEQAAADPNVLAIKQTLYRTSGDSPIVRALIDAAEAGKQVVALVEIKARFDEQANIRWARALEQAGVHVAYGIVGLKTHCKTALVVRREGPVIRRYCHIGTGNYNSKTARLYEDVGLLTAAPDIGADLTDLFNSLTGYSRKLSYRNLLVAPHGIRAGIIERVEREVAAHLEHGPQAGKGHIRLKMNALVDEQVIDALYRASQVGVRIEVVVRGICALRPGAEGFSENITARSILGRFLEHSRILHFRAIDEFWIGSADMMHRNLDRRVEVMAQVKDPRLTAQLDDLFESALDPATRCWELGPDGQWTASPQEGRTVRDHQVSLMERHRSP</sequence>
<reference key="1">
    <citation type="journal article" date="2008" name="Genome Res.">
        <title>Insights from the complete genome sequence of Mycobacterium marinum on the evolution of Mycobacterium tuberculosis.</title>
        <authorList>
            <person name="Stinear T.P."/>
            <person name="Seemann T."/>
            <person name="Harrison P.F."/>
            <person name="Jenkin G.A."/>
            <person name="Davies J.K."/>
            <person name="Johnson P.D."/>
            <person name="Abdellah Z."/>
            <person name="Arrowsmith C."/>
            <person name="Chillingworth T."/>
            <person name="Churcher C."/>
            <person name="Clarke K."/>
            <person name="Cronin A."/>
            <person name="Davis P."/>
            <person name="Goodhead I."/>
            <person name="Holroyd N."/>
            <person name="Jagels K."/>
            <person name="Lord A."/>
            <person name="Moule S."/>
            <person name="Mungall K."/>
            <person name="Norbertczak H."/>
            <person name="Quail M.A."/>
            <person name="Rabbinowitsch E."/>
            <person name="Walker D."/>
            <person name="White B."/>
            <person name="Whitehead S."/>
            <person name="Small P.L."/>
            <person name="Brosch R."/>
            <person name="Ramakrishnan L."/>
            <person name="Fischbach M.A."/>
            <person name="Parkhill J."/>
            <person name="Cole S.T."/>
        </authorList>
    </citation>
    <scope>NUCLEOTIDE SEQUENCE [LARGE SCALE GENOMIC DNA]</scope>
    <source>
        <strain>ATCC BAA-535 / M</strain>
    </source>
</reference>
<comment type="function">
    <text evidence="1">Catalyzes the reversible transfer of the terminal phosphate of ATP to form a long-chain polyphosphate (polyP).</text>
</comment>
<comment type="catalytic activity">
    <reaction evidence="1">
        <text>[phosphate](n) + ATP = [phosphate](n+1) + ADP</text>
        <dbReference type="Rhea" id="RHEA:19573"/>
        <dbReference type="Rhea" id="RHEA-COMP:9859"/>
        <dbReference type="Rhea" id="RHEA-COMP:14280"/>
        <dbReference type="ChEBI" id="CHEBI:16838"/>
        <dbReference type="ChEBI" id="CHEBI:30616"/>
        <dbReference type="ChEBI" id="CHEBI:456216"/>
        <dbReference type="EC" id="2.7.4.1"/>
    </reaction>
</comment>
<comment type="cofactor">
    <cofactor evidence="1">
        <name>Mg(2+)</name>
        <dbReference type="ChEBI" id="CHEBI:18420"/>
    </cofactor>
</comment>
<comment type="PTM">
    <text evidence="1">An intermediate of this reaction is the autophosphorylated ppk in which a phosphate is covalently linked to a histidine residue through a N-P bond.</text>
</comment>
<comment type="similarity">
    <text evidence="1">Belongs to the polyphosphate kinase 1 (PPK1) family.</text>
</comment>
<dbReference type="EC" id="2.7.4.1" evidence="1"/>
<dbReference type="EMBL" id="CP000854">
    <property type="protein sequence ID" value="ACC40179.1"/>
    <property type="molecule type" value="Genomic_DNA"/>
</dbReference>
<dbReference type="RefSeq" id="WP_012393542.1">
    <property type="nucleotide sequence ID" value="NC_010612.1"/>
</dbReference>
<dbReference type="SMR" id="B2HII5"/>
<dbReference type="STRING" id="216594.MMAR_1730"/>
<dbReference type="KEGG" id="mmi:MMAR_1730"/>
<dbReference type="eggNOG" id="COG0855">
    <property type="taxonomic scope" value="Bacteria"/>
</dbReference>
<dbReference type="HOGENOM" id="CLU_009678_4_2_11"/>
<dbReference type="OrthoDB" id="9761456at2"/>
<dbReference type="Proteomes" id="UP000001190">
    <property type="component" value="Chromosome"/>
</dbReference>
<dbReference type="GO" id="GO:0009358">
    <property type="term" value="C:polyphosphate kinase complex"/>
    <property type="evidence" value="ECO:0007669"/>
    <property type="project" value="InterPro"/>
</dbReference>
<dbReference type="GO" id="GO:0005524">
    <property type="term" value="F:ATP binding"/>
    <property type="evidence" value="ECO:0007669"/>
    <property type="project" value="UniProtKB-KW"/>
</dbReference>
<dbReference type="GO" id="GO:0046872">
    <property type="term" value="F:metal ion binding"/>
    <property type="evidence" value="ECO:0007669"/>
    <property type="project" value="UniProtKB-KW"/>
</dbReference>
<dbReference type="GO" id="GO:0008976">
    <property type="term" value="F:polyphosphate kinase activity"/>
    <property type="evidence" value="ECO:0007669"/>
    <property type="project" value="UniProtKB-UniRule"/>
</dbReference>
<dbReference type="GO" id="GO:0006799">
    <property type="term" value="P:polyphosphate biosynthetic process"/>
    <property type="evidence" value="ECO:0007669"/>
    <property type="project" value="UniProtKB-UniRule"/>
</dbReference>
<dbReference type="CDD" id="cd09165">
    <property type="entry name" value="PLDc_PaPPK1_C1_like"/>
    <property type="match status" value="1"/>
</dbReference>
<dbReference type="FunFam" id="3.30.1840.10:FF:000002">
    <property type="entry name" value="Polyphosphate kinase"/>
    <property type="match status" value="1"/>
</dbReference>
<dbReference type="FunFam" id="3.30.870.10:FF:000001">
    <property type="entry name" value="Polyphosphate kinase"/>
    <property type="match status" value="1"/>
</dbReference>
<dbReference type="Gene3D" id="3.30.870.10">
    <property type="entry name" value="Endonuclease Chain A"/>
    <property type="match status" value="2"/>
</dbReference>
<dbReference type="Gene3D" id="3.30.1840.10">
    <property type="entry name" value="Polyphosphate kinase middle domain"/>
    <property type="match status" value="1"/>
</dbReference>
<dbReference type="Gene3D" id="1.20.58.310">
    <property type="entry name" value="Polyphosphate kinase N-terminal domain"/>
    <property type="match status" value="1"/>
</dbReference>
<dbReference type="HAMAP" id="MF_00347">
    <property type="entry name" value="Polyphosphate_kinase"/>
    <property type="match status" value="1"/>
</dbReference>
<dbReference type="InterPro" id="IPR003414">
    <property type="entry name" value="PP_kinase"/>
</dbReference>
<dbReference type="InterPro" id="IPR041108">
    <property type="entry name" value="PP_kinase_C_1"/>
</dbReference>
<dbReference type="InterPro" id="IPR024953">
    <property type="entry name" value="PP_kinase_middle"/>
</dbReference>
<dbReference type="InterPro" id="IPR036830">
    <property type="entry name" value="PP_kinase_middle_dom_sf"/>
</dbReference>
<dbReference type="InterPro" id="IPR025200">
    <property type="entry name" value="PPK_C_dom2"/>
</dbReference>
<dbReference type="InterPro" id="IPR025198">
    <property type="entry name" value="PPK_N_dom"/>
</dbReference>
<dbReference type="InterPro" id="IPR036832">
    <property type="entry name" value="PPK_N_dom_sf"/>
</dbReference>
<dbReference type="NCBIfam" id="TIGR03705">
    <property type="entry name" value="poly_P_kin"/>
    <property type="match status" value="1"/>
</dbReference>
<dbReference type="NCBIfam" id="NF003917">
    <property type="entry name" value="PRK05443.1-1"/>
    <property type="match status" value="1"/>
</dbReference>
<dbReference type="NCBIfam" id="NF003918">
    <property type="entry name" value="PRK05443.1-2"/>
    <property type="match status" value="1"/>
</dbReference>
<dbReference type="NCBIfam" id="NF003921">
    <property type="entry name" value="PRK05443.2-2"/>
    <property type="match status" value="1"/>
</dbReference>
<dbReference type="NCBIfam" id="NF003922">
    <property type="entry name" value="PRK05443.2-3"/>
    <property type="match status" value="1"/>
</dbReference>
<dbReference type="PANTHER" id="PTHR30218">
    <property type="entry name" value="POLYPHOSPHATE KINASE"/>
    <property type="match status" value="1"/>
</dbReference>
<dbReference type="PANTHER" id="PTHR30218:SF0">
    <property type="entry name" value="POLYPHOSPHATE KINASE"/>
    <property type="match status" value="1"/>
</dbReference>
<dbReference type="Pfam" id="PF02503">
    <property type="entry name" value="PP_kinase"/>
    <property type="match status" value="1"/>
</dbReference>
<dbReference type="Pfam" id="PF13090">
    <property type="entry name" value="PP_kinase_C"/>
    <property type="match status" value="1"/>
</dbReference>
<dbReference type="Pfam" id="PF17941">
    <property type="entry name" value="PP_kinase_C_1"/>
    <property type="match status" value="1"/>
</dbReference>
<dbReference type="Pfam" id="PF13089">
    <property type="entry name" value="PP_kinase_N"/>
    <property type="match status" value="1"/>
</dbReference>
<dbReference type="PIRSF" id="PIRSF015589">
    <property type="entry name" value="PP_kinase"/>
    <property type="match status" value="1"/>
</dbReference>
<dbReference type="SUPFAM" id="SSF56024">
    <property type="entry name" value="Phospholipase D/nuclease"/>
    <property type="match status" value="2"/>
</dbReference>
<dbReference type="SUPFAM" id="SSF143724">
    <property type="entry name" value="PHP14-like"/>
    <property type="match status" value="1"/>
</dbReference>
<dbReference type="SUPFAM" id="SSF140356">
    <property type="entry name" value="PPK N-terminal domain-like"/>
    <property type="match status" value="1"/>
</dbReference>